<accession>Q29043</accession>
<accession>O19101</accession>
<feature type="chain" id="PRO_0000149100" description="Galactoside alpha-(1,2)-fucosyltransferase 1">
    <location>
        <begin position="1"/>
        <end position="365"/>
    </location>
</feature>
<feature type="topological domain" description="Cytoplasmic" evidence="4">
    <location>
        <begin position="1"/>
        <end position="8"/>
    </location>
</feature>
<feature type="transmembrane region" description="Helical; Signal-anchor for type II membrane protein" evidence="4">
    <location>
        <begin position="9"/>
        <end position="28"/>
    </location>
</feature>
<feature type="topological domain" description="Lumenal" evidence="4">
    <location>
        <begin position="29"/>
        <end position="365"/>
    </location>
</feature>
<feature type="glycosylation site" description="N-linked (GlcNAc...) asparagine" evidence="4">
    <location>
        <position position="65"/>
    </location>
</feature>
<feature type="glycosylation site" description="N-linked (GlcNAc...) asparagine" evidence="4">
    <location>
        <position position="301"/>
    </location>
</feature>
<feature type="glycosylation site" description="N-linked (GlcNAc...) asparagine" evidence="4">
    <location>
        <position position="327"/>
    </location>
</feature>
<feature type="sequence variant" evidence="5 6">
    <original>A</original>
    <variation>T</variation>
    <location>
        <position position="103"/>
    </location>
</feature>
<feature type="sequence variant" evidence="5 6">
    <original>R</original>
    <variation>E</variation>
    <location>
        <position position="286"/>
    </location>
</feature>
<feature type="sequence conflict" description="In Ref. 1; AAB02984." evidence="7" ref="1">
    <original>L</original>
    <variation>F</variation>
    <location>
        <position position="77"/>
    </location>
</feature>
<reference key="1">
    <citation type="journal article" date="1996" name="Immunogenetics">
        <title>Molecular cloning of the gene coding for pig alpha1--&gt;2 fucosyltransferase.</title>
        <authorList>
            <person name="Cohney S."/>
            <person name="Mouhtouris E."/>
            <person name="McKenzie I.F."/>
            <person name="Sandrin M.S."/>
        </authorList>
    </citation>
    <scope>NUCLEOTIDE SEQUENCE [GENOMIC DNA]</scope>
</reference>
<reference key="2">
    <citation type="journal article" date="1997" name="Mamm. Genome">
        <title>Two alpha(1,2) fucosyltransferase genes on porcine chromosome 6q11 are closely linked to the blood group inhibitor (S) and Escherichia coli F18 receptor (ECF18R) loci.</title>
        <authorList>
            <person name="Meijerink E."/>
            <person name="Fries R."/>
            <person name="Voegeli P."/>
            <person name="Masabanda J."/>
            <person name="Wigger G."/>
            <person name="Stricker C."/>
            <person name="Neuenschwander S."/>
            <person name="Bertschinger H.U."/>
            <person name="Stranzinger G."/>
        </authorList>
    </citation>
    <scope>NUCLEOTIDE SEQUENCE [GENOMIC DNA]</scope>
    <scope>VARIANTS THR-103 AND GLU-286</scope>
</reference>
<reference key="3">
    <citation type="journal article" date="2000" name="Immunogenetics">
        <title>A DNA polymorphism influencing alpha(1,2)fucosyltransferase activity of the pig FUT1 enzyme determines susceptibility of small intestinal epithelium to Escherichia coli F18 adhesion.</title>
        <authorList>
            <person name="Meijerink E."/>
            <person name="Neuenschwander S."/>
            <person name="Fries R."/>
            <person name="Dinter A."/>
            <person name="Bertschinger H.U."/>
            <person name="Stranzinger G."/>
            <person name="Vogeli P."/>
        </authorList>
    </citation>
    <scope>NUCLEOTIDE SEQUENCE [GENOMIC DNA / MRNA]</scope>
    <scope>VARIANTS THR-103 AND GLU-286</scope>
    <source>
        <tissue>Small intestine</tissue>
    </source>
</reference>
<gene>
    <name evidence="3" type="primary">FUT1</name>
</gene>
<evidence type="ECO:0000250" key="1">
    <source>
        <dbReference type="UniProtKB" id="F6Q1T7"/>
    </source>
</evidence>
<evidence type="ECO:0000250" key="2">
    <source>
        <dbReference type="UniProtKB" id="O09160"/>
    </source>
</evidence>
<evidence type="ECO:0000250" key="3">
    <source>
        <dbReference type="UniProtKB" id="P19526"/>
    </source>
</evidence>
<evidence type="ECO:0000255" key="4"/>
<evidence type="ECO:0000269" key="5">
    <source>
    </source>
</evidence>
<evidence type="ECO:0000269" key="6">
    <source>
    </source>
</evidence>
<evidence type="ECO:0000305" key="7"/>
<name>FUT1_PIG</name>
<keyword id="KW-0325">Glycoprotein</keyword>
<keyword id="KW-0328">Glycosyltransferase</keyword>
<keyword id="KW-0333">Golgi apparatus</keyword>
<keyword id="KW-0443">Lipid metabolism</keyword>
<keyword id="KW-0472">Membrane</keyword>
<keyword id="KW-1185">Reference proteome</keyword>
<keyword id="KW-0735">Signal-anchor</keyword>
<keyword id="KW-0808">Transferase</keyword>
<keyword id="KW-0812">Transmembrane</keyword>
<keyword id="KW-1133">Transmembrane helix</keyword>
<proteinExistence type="evidence at transcript level"/>
<protein>
    <recommendedName>
        <fullName evidence="3">Galactoside alpha-(1,2)-fucosyltransferase 1</fullName>
    </recommendedName>
    <alternativeName>
        <fullName>Alpha(1,2)FT 1</fullName>
    </alternativeName>
    <alternativeName>
        <fullName>Fucosyltransferase 1</fullName>
    </alternativeName>
    <alternativeName>
        <fullName>GDP-L-fucose:beta-D-galactoside 2-alpha-L-fucosyltransferase 1</fullName>
    </alternativeName>
    <alternativeName>
        <fullName evidence="2">Type 1 galactoside alpha-(1,2)-fucosyltransferase FUT1</fullName>
        <ecNumber evidence="2">2.4.1.69</ecNumber>
    </alternativeName>
    <alternativeName>
        <fullName evidence="3">Type 2 galactoside alpha-(1,2)-fucosyltransferase FUT1</fullName>
        <ecNumber evidence="3">2.4.1.344</ecNumber>
    </alternativeName>
</protein>
<organism>
    <name type="scientific">Sus scrofa</name>
    <name type="common">Pig</name>
    <dbReference type="NCBI Taxonomy" id="9823"/>
    <lineage>
        <taxon>Eukaryota</taxon>
        <taxon>Metazoa</taxon>
        <taxon>Chordata</taxon>
        <taxon>Craniata</taxon>
        <taxon>Vertebrata</taxon>
        <taxon>Euteleostomi</taxon>
        <taxon>Mammalia</taxon>
        <taxon>Eutheria</taxon>
        <taxon>Laurasiatheria</taxon>
        <taxon>Artiodactyla</taxon>
        <taxon>Suina</taxon>
        <taxon>Suidae</taxon>
        <taxon>Sus</taxon>
    </lineage>
</organism>
<dbReference type="EC" id="2.4.1.69" evidence="2"/>
<dbReference type="EC" id="2.4.1.344" evidence="3"/>
<dbReference type="EMBL" id="L50534">
    <property type="protein sequence ID" value="AAB02984.1"/>
    <property type="molecule type" value="Genomic_DNA"/>
</dbReference>
<dbReference type="EMBL" id="U70883">
    <property type="protein sequence ID" value="AAB81884.1"/>
    <property type="molecule type" value="Genomic_DNA"/>
</dbReference>
<dbReference type="EMBL" id="AF136896">
    <property type="protein sequence ID" value="AAF59833.1"/>
    <property type="molecule type" value="mRNA"/>
</dbReference>
<dbReference type="RefSeq" id="NP_001421918.1">
    <property type="nucleotide sequence ID" value="NM_001434989.1"/>
</dbReference>
<dbReference type="RefSeq" id="NP_999233.1">
    <property type="nucleotide sequence ID" value="NM_214068.3"/>
</dbReference>
<dbReference type="SMR" id="Q29043"/>
<dbReference type="FunCoup" id="Q29043">
    <property type="interactions" value="31"/>
</dbReference>
<dbReference type="STRING" id="9823.ENSSSCP00000062180"/>
<dbReference type="CAZy" id="GT11">
    <property type="family name" value="Glycosyltransferase Family 11"/>
</dbReference>
<dbReference type="GlyCosmos" id="Q29043">
    <property type="glycosylation" value="3 sites, No reported glycans"/>
</dbReference>
<dbReference type="GlyGen" id="Q29043">
    <property type="glycosylation" value="3 sites"/>
</dbReference>
<dbReference type="PaxDb" id="9823-ENSSSCP00000003400"/>
<dbReference type="Ensembl" id="ENSSSCT00015035435.1">
    <property type="protein sequence ID" value="ENSSSCP00015014100.1"/>
    <property type="gene ID" value="ENSSSCG00015026684.1"/>
</dbReference>
<dbReference type="Ensembl" id="ENSSSCT00015035542.1">
    <property type="protein sequence ID" value="ENSSSCP00015014142.1"/>
    <property type="gene ID" value="ENSSSCG00015026684.1"/>
</dbReference>
<dbReference type="Ensembl" id="ENSSSCT00015035552.1">
    <property type="protein sequence ID" value="ENSSSCP00015014146.1"/>
    <property type="gene ID" value="ENSSSCG00015026684.1"/>
</dbReference>
<dbReference type="Ensembl" id="ENSSSCT00015035584.1">
    <property type="protein sequence ID" value="ENSSSCP00015014160.1"/>
    <property type="gene ID" value="ENSSSCG00015026684.1"/>
</dbReference>
<dbReference type="Ensembl" id="ENSSSCT00025024193.1">
    <property type="protein sequence ID" value="ENSSSCP00025010233.1"/>
    <property type="gene ID" value="ENSSSCG00025017841.1"/>
</dbReference>
<dbReference type="Ensembl" id="ENSSSCT00025024203.1">
    <property type="protein sequence ID" value="ENSSSCP00025010241.1"/>
    <property type="gene ID" value="ENSSSCG00025017841.1"/>
</dbReference>
<dbReference type="Ensembl" id="ENSSSCT00025024218.1">
    <property type="protein sequence ID" value="ENSSSCP00025010247.1"/>
    <property type="gene ID" value="ENSSSCG00025017841.1"/>
</dbReference>
<dbReference type="Ensembl" id="ENSSSCT00025024242.1">
    <property type="protein sequence ID" value="ENSSSCP00025010254.1"/>
    <property type="gene ID" value="ENSSSCG00025017841.1"/>
</dbReference>
<dbReference type="Ensembl" id="ENSSSCT00070055868.1">
    <property type="protein sequence ID" value="ENSSSCP00070047459.1"/>
    <property type="gene ID" value="ENSSSCG00070027846.1"/>
</dbReference>
<dbReference type="Ensembl" id="ENSSSCT00115014757">
    <property type="protein sequence ID" value="ENSSSCP00115013943"/>
    <property type="gene ID" value="ENSSSCG00115008460"/>
</dbReference>
<dbReference type="GeneID" id="397138"/>
<dbReference type="KEGG" id="ssc:397138"/>
<dbReference type="CTD" id="2523"/>
<dbReference type="eggNOG" id="ENOG502S316">
    <property type="taxonomic scope" value="Eukaryota"/>
</dbReference>
<dbReference type="InParanoid" id="Q29043"/>
<dbReference type="OrthoDB" id="3226at2759"/>
<dbReference type="BRENDA" id="2.4.1.69">
    <property type="organism ID" value="6170"/>
</dbReference>
<dbReference type="Reactome" id="R-SSC-9033807">
    <property type="pathway name" value="ABO blood group biosynthesis"/>
</dbReference>
<dbReference type="Reactome" id="R-SSC-9840309">
    <property type="pathway name" value="Glycosphingolipid biosynthesis"/>
</dbReference>
<dbReference type="UniPathway" id="UPA00378"/>
<dbReference type="Proteomes" id="UP000008227">
    <property type="component" value="Unplaced"/>
</dbReference>
<dbReference type="Proteomes" id="UP000314985">
    <property type="component" value="Chromosome 6"/>
</dbReference>
<dbReference type="Proteomes" id="UP000694570">
    <property type="component" value="Unplaced"/>
</dbReference>
<dbReference type="Proteomes" id="UP000694571">
    <property type="component" value="Unplaced"/>
</dbReference>
<dbReference type="Proteomes" id="UP000694720">
    <property type="component" value="Unplaced"/>
</dbReference>
<dbReference type="Proteomes" id="UP000694722">
    <property type="component" value="Unplaced"/>
</dbReference>
<dbReference type="Proteomes" id="UP000694723">
    <property type="component" value="Unplaced"/>
</dbReference>
<dbReference type="Proteomes" id="UP000694724">
    <property type="component" value="Unplaced"/>
</dbReference>
<dbReference type="Proteomes" id="UP000694725">
    <property type="component" value="Unplaced"/>
</dbReference>
<dbReference type="Proteomes" id="UP000694726">
    <property type="component" value="Unplaced"/>
</dbReference>
<dbReference type="Proteomes" id="UP000694727">
    <property type="component" value="Unplaced"/>
</dbReference>
<dbReference type="Proteomes" id="UP000694728">
    <property type="component" value="Unplaced"/>
</dbReference>
<dbReference type="GO" id="GO:0032580">
    <property type="term" value="C:Golgi cisterna membrane"/>
    <property type="evidence" value="ECO:0007669"/>
    <property type="project" value="UniProtKB-SubCell"/>
</dbReference>
<dbReference type="GO" id="GO:0031127">
    <property type="term" value="F:alpha-(1,2)-fucosyltransferase activity"/>
    <property type="evidence" value="ECO:0000250"/>
    <property type="project" value="UniProtKB"/>
</dbReference>
<dbReference type="GO" id="GO:0008107">
    <property type="term" value="F:galactoside 2-alpha-L-fucosyltransferase activity"/>
    <property type="evidence" value="ECO:0000318"/>
    <property type="project" value="GO_Central"/>
</dbReference>
<dbReference type="GO" id="GO:0005975">
    <property type="term" value="P:carbohydrate metabolic process"/>
    <property type="evidence" value="ECO:0007669"/>
    <property type="project" value="InterPro"/>
</dbReference>
<dbReference type="GO" id="GO:0036065">
    <property type="term" value="P:fucosylation"/>
    <property type="evidence" value="ECO:0000250"/>
    <property type="project" value="UniProtKB"/>
</dbReference>
<dbReference type="GO" id="GO:0006629">
    <property type="term" value="P:lipid metabolic process"/>
    <property type="evidence" value="ECO:0007669"/>
    <property type="project" value="UniProtKB-KW"/>
</dbReference>
<dbReference type="GO" id="GO:0021772">
    <property type="term" value="P:olfactory bulb development"/>
    <property type="evidence" value="ECO:0000250"/>
    <property type="project" value="UniProtKB"/>
</dbReference>
<dbReference type="GO" id="GO:0001954">
    <property type="term" value="P:positive regulation of cell-matrix adhesion"/>
    <property type="evidence" value="ECO:0000250"/>
    <property type="project" value="UniProtKB"/>
</dbReference>
<dbReference type="GO" id="GO:0010595">
    <property type="term" value="P:positive regulation of endothelial cell migration"/>
    <property type="evidence" value="ECO:0000250"/>
    <property type="project" value="UniProtKB"/>
</dbReference>
<dbReference type="GO" id="GO:1904906">
    <property type="term" value="P:positive regulation of endothelial cell-matrix adhesion via fibronectin"/>
    <property type="evidence" value="ECO:0000250"/>
    <property type="project" value="UniProtKB"/>
</dbReference>
<dbReference type="GO" id="GO:1903672">
    <property type="term" value="P:positive regulation of sprouting angiogenesis"/>
    <property type="evidence" value="ECO:0000250"/>
    <property type="project" value="UniProtKB"/>
</dbReference>
<dbReference type="GO" id="GO:0006486">
    <property type="term" value="P:protein glycosylation"/>
    <property type="evidence" value="ECO:0000250"/>
    <property type="project" value="UniProtKB"/>
</dbReference>
<dbReference type="GO" id="GO:0030155">
    <property type="term" value="P:regulation of cell adhesion"/>
    <property type="evidence" value="ECO:0000250"/>
    <property type="project" value="UniProtKB"/>
</dbReference>
<dbReference type="GO" id="GO:0001936">
    <property type="term" value="P:regulation of endothelial cell proliferation"/>
    <property type="evidence" value="ECO:0000250"/>
    <property type="project" value="UniProtKB"/>
</dbReference>
<dbReference type="CDD" id="cd11301">
    <property type="entry name" value="Fut1_Fut2_like"/>
    <property type="match status" value="1"/>
</dbReference>
<dbReference type="InterPro" id="IPR002516">
    <property type="entry name" value="Glyco_trans_11"/>
</dbReference>
<dbReference type="PANTHER" id="PTHR11927">
    <property type="entry name" value="GALACTOSIDE 2-L-FUCOSYLTRANSFERASE"/>
    <property type="match status" value="1"/>
</dbReference>
<dbReference type="PANTHER" id="PTHR11927:SF4">
    <property type="entry name" value="GALACTOSIDE ALPHA-(1,2)-FUCOSYLTRANSFERASE 1"/>
    <property type="match status" value="1"/>
</dbReference>
<dbReference type="Pfam" id="PF01531">
    <property type="entry name" value="Glyco_transf_11"/>
    <property type="match status" value="1"/>
</dbReference>
<comment type="function">
    <text evidence="2 3">Catalyzes the transfer of L-fucose, from a guanosine diphosphate-beta-L-fucose, to the terminal galactose residue of glycoconjugates through an alpha(1,2) linkage leading to H antigen synthesis that is an intermediate substrate in the synthesis of ABO blood group antigens. H antigen is essential for maturation of the glomerular layer of the main olfactory bulb, in cell migration and early cell-cell contacts during tumor associated angiogenesis (By similarity). Preferentially fucosylates soluble lactose and to a lesser extent fucosylates glycolipids gangliosides GA1 and GM1a (By similarity).</text>
</comment>
<comment type="catalytic activity">
    <reaction evidence="3">
        <text>a beta-D-galactosyl-(1-&gt;4)-N-acetyl-beta-D-glucosaminyl derivative + GDP-beta-L-fucose = an alpha-L-Fuc-(1-&gt;2)-beta-D-Gal-(1-&gt;4)-beta-D-GlcNAc derivative + GDP + H(+)</text>
        <dbReference type="Rhea" id="RHEA:50668"/>
        <dbReference type="ChEBI" id="CHEBI:15378"/>
        <dbReference type="ChEBI" id="CHEBI:57273"/>
        <dbReference type="ChEBI" id="CHEBI:58189"/>
        <dbReference type="ChEBI" id="CHEBI:133507"/>
        <dbReference type="ChEBI" id="CHEBI:133510"/>
        <dbReference type="EC" id="2.4.1.344"/>
    </reaction>
</comment>
<comment type="catalytic activity">
    <reaction evidence="2">
        <text>a ganglioside GA1 + GDP-beta-L-fucose = a ganglioside Fuc-GA1 + GDP + H(+)</text>
        <dbReference type="Rhea" id="RHEA:48320"/>
        <dbReference type="ChEBI" id="CHEBI:15378"/>
        <dbReference type="ChEBI" id="CHEBI:57273"/>
        <dbReference type="ChEBI" id="CHEBI:58189"/>
        <dbReference type="ChEBI" id="CHEBI:88069"/>
        <dbReference type="ChEBI" id="CHEBI:90262"/>
    </reaction>
    <physiologicalReaction direction="left-to-right" evidence="2">
        <dbReference type="Rhea" id="RHEA:48321"/>
    </physiologicalReaction>
</comment>
<comment type="catalytic activity">
    <reaction evidence="2">
        <text>a beta-D-Gal-(1-&gt;3)-beta-D-GlcNAc-(1-&gt;3)-beta-D-Gal-(1-&gt;4)-beta-D-Glc-(1&lt;-&gt;1')-Cer(d18:1(4E)) + GDP-beta-L-fucose = alpha-L-fucosyl-(1-&gt;2)- beta-D-galactosyl-(1-&gt;3)-N-acetyl-beta-D-glucosaminyl-(1-&gt;3)-beta-D-galactosyl-(1-&gt;4)-beta-D-glucosyl-(1&lt;-&gt;1')-N-acylsphing-4-enine + GDP + H(+)</text>
        <dbReference type="Rhea" id="RHEA:32175"/>
        <dbReference type="ChEBI" id="CHEBI:15378"/>
        <dbReference type="ChEBI" id="CHEBI:17292"/>
        <dbReference type="ChEBI" id="CHEBI:28743"/>
        <dbReference type="ChEBI" id="CHEBI:57273"/>
        <dbReference type="ChEBI" id="CHEBI:58189"/>
        <dbReference type="EC" id="2.4.1.69"/>
    </reaction>
    <physiologicalReaction direction="left-to-right" evidence="2">
        <dbReference type="Rhea" id="RHEA:32176"/>
    </physiologicalReaction>
</comment>
<comment type="catalytic activity">
    <reaction evidence="2">
        <text>a neolactoside nLc4Cer(d18:1(4E)) + GDP-beta-L-fucose = a neolactoside IV(2)-alpha-Fuc-nLc4Cer(d18:1(4E)) + GDP + H(+)</text>
        <dbReference type="Rhea" id="RHEA:48304"/>
        <dbReference type="ChEBI" id="CHEBI:15378"/>
        <dbReference type="ChEBI" id="CHEBI:17006"/>
        <dbReference type="ChEBI" id="CHEBI:28691"/>
        <dbReference type="ChEBI" id="CHEBI:57273"/>
        <dbReference type="ChEBI" id="CHEBI:58189"/>
    </reaction>
    <physiologicalReaction direction="left-to-right" evidence="2">
        <dbReference type="Rhea" id="RHEA:48305"/>
    </physiologicalReaction>
</comment>
<comment type="catalytic activity">
    <reaction evidence="1">
        <text>a ganglioside GM1 + GDP-beta-L-fucose = a ganglioside Fuc-GM1 + GDP + H(+)</text>
        <dbReference type="Rhea" id="RHEA:48292"/>
        <dbReference type="ChEBI" id="CHEBI:15378"/>
        <dbReference type="ChEBI" id="CHEBI:57273"/>
        <dbReference type="ChEBI" id="CHEBI:58189"/>
        <dbReference type="ChEBI" id="CHEBI:82639"/>
        <dbReference type="ChEBI" id="CHEBI:90189"/>
    </reaction>
    <physiologicalReaction direction="left-to-right" evidence="1">
        <dbReference type="Rhea" id="RHEA:48293"/>
    </physiologicalReaction>
</comment>
<comment type="catalytic activity">
    <reaction evidence="1">
        <text>beta-D-galactosyl-(1-&gt;3)-N-acetyl-D-galactosamine + GDP-beta-L-fucose = alpha-L-fucosyl-(1-&gt;2)-beta-D-galactosyl-(1-&gt;3)-N-acetyl-D-galactosamine + GDP + H(+)</text>
        <dbReference type="Rhea" id="RHEA:62964"/>
        <dbReference type="ChEBI" id="CHEBI:15378"/>
        <dbReference type="ChEBI" id="CHEBI:57273"/>
        <dbReference type="ChEBI" id="CHEBI:58189"/>
        <dbReference type="ChEBI" id="CHEBI:84728"/>
        <dbReference type="ChEBI" id="CHEBI:546807"/>
    </reaction>
    <physiologicalReaction direction="left-to-right" evidence="1">
        <dbReference type="Rhea" id="RHEA:62965"/>
    </physiologicalReaction>
</comment>
<comment type="pathway">
    <text evidence="3">Protein modification; protein glycosylation.</text>
</comment>
<comment type="subcellular location">
    <subcellularLocation>
        <location evidence="2">Golgi apparatus</location>
        <location evidence="2">Golgi stack membrane</location>
        <topology evidence="2">Single-pass type II membrane protein</topology>
    </subcellularLocation>
    <text evidence="2">Membrane-bound form in trans cisternae of Golgi.</text>
</comment>
<comment type="miscellaneous">
    <text>There are two genes (Fut1 and Fut2) which encode galactoside 2-L-fucosyltransferase. They are expressed in a tissue-specific manner.</text>
</comment>
<comment type="similarity">
    <text evidence="7">Belongs to the glycosyltransferase 11 family.</text>
</comment>
<sequence>MWVPSRRHLCLTFLLVCVLAAIFFLNVYQDLFYSGLDLLALCPDHNVVSSPVAIFCLAGTPVHPNASDSCPKHPASLSGTWTIYPDGRFGNQMGQYATLLALAQLNGRQAFIQPAMHAVLAPVFRITLPVLAPEVDRHAPWRELELHDWMSEDYAHLKEPWLKLTGFPCSWTFFHHLREQIRSEFTLHDHLRQEAQGVLSQFRLPRTGDRPSTFVGVHVRRGDYLRVMPKRWKGVVGDGAYLQQAMDWFRARYEAPVFVVTSNGMEWCRKNIDTSRGDVIFAGDGREAAPARDFALLVQCNHTIMTIGTFGFWAAYLAGGDTIYLANFTLPTSSFLKIFKPEAAFLPEWVGINADLSPLQMLAGP</sequence>